<accession>Q9HDT7</accession>
<keyword id="KW-0325">Glycoprotein</keyword>
<keyword id="KW-1185">Reference proteome</keyword>
<keyword id="KW-0732">Signal</keyword>
<gene>
    <name type="ORF">SPCP20C8.02c</name>
</gene>
<organism>
    <name type="scientific">Schizosaccharomyces pombe (strain 972 / ATCC 24843)</name>
    <name type="common">Fission yeast</name>
    <dbReference type="NCBI Taxonomy" id="284812"/>
    <lineage>
        <taxon>Eukaryota</taxon>
        <taxon>Fungi</taxon>
        <taxon>Dikarya</taxon>
        <taxon>Ascomycota</taxon>
        <taxon>Taphrinomycotina</taxon>
        <taxon>Schizosaccharomycetes</taxon>
        <taxon>Schizosaccharomycetales</taxon>
        <taxon>Schizosaccharomycetaceae</taxon>
        <taxon>Schizosaccharomyces</taxon>
    </lineage>
</organism>
<name>YJ52_SCHPO</name>
<comment type="similarity">
    <text evidence="2">Belongs to the UPF0321 family.</text>
</comment>
<feature type="signal peptide" evidence="1">
    <location>
        <begin position="1"/>
        <end position="17"/>
    </location>
</feature>
<feature type="chain" id="PRO_0000036321" description="UPF0321 protein P20C8.02c">
    <location>
        <begin position="18"/>
        <end position="111"/>
    </location>
</feature>
<feature type="glycosylation site" description="N-linked (GlcNAc...) asparagine" evidence="1">
    <location>
        <position position="20"/>
    </location>
</feature>
<protein>
    <recommendedName>
        <fullName>UPF0321 protein P20C8.02c</fullName>
    </recommendedName>
</protein>
<reference key="1">
    <citation type="journal article" date="2002" name="Nature">
        <title>The genome sequence of Schizosaccharomyces pombe.</title>
        <authorList>
            <person name="Wood V."/>
            <person name="Gwilliam R."/>
            <person name="Rajandream M.A."/>
            <person name="Lyne M.H."/>
            <person name="Lyne R."/>
            <person name="Stewart A."/>
            <person name="Sgouros J.G."/>
            <person name="Peat N."/>
            <person name="Hayles J."/>
            <person name="Baker S.G."/>
            <person name="Basham D."/>
            <person name="Bowman S."/>
            <person name="Brooks K."/>
            <person name="Brown D."/>
            <person name="Brown S."/>
            <person name="Chillingworth T."/>
            <person name="Churcher C.M."/>
            <person name="Collins M."/>
            <person name="Connor R."/>
            <person name="Cronin A."/>
            <person name="Davis P."/>
            <person name="Feltwell T."/>
            <person name="Fraser A."/>
            <person name="Gentles S."/>
            <person name="Goble A."/>
            <person name="Hamlin N."/>
            <person name="Harris D.E."/>
            <person name="Hidalgo J."/>
            <person name="Hodgson G."/>
            <person name="Holroyd S."/>
            <person name="Hornsby T."/>
            <person name="Howarth S."/>
            <person name="Huckle E.J."/>
            <person name="Hunt S."/>
            <person name="Jagels K."/>
            <person name="James K.D."/>
            <person name="Jones L."/>
            <person name="Jones M."/>
            <person name="Leather S."/>
            <person name="McDonald S."/>
            <person name="McLean J."/>
            <person name="Mooney P."/>
            <person name="Moule S."/>
            <person name="Mungall K.L."/>
            <person name="Murphy L.D."/>
            <person name="Niblett D."/>
            <person name="Odell C."/>
            <person name="Oliver K."/>
            <person name="O'Neil S."/>
            <person name="Pearson D."/>
            <person name="Quail M.A."/>
            <person name="Rabbinowitsch E."/>
            <person name="Rutherford K.M."/>
            <person name="Rutter S."/>
            <person name="Saunders D."/>
            <person name="Seeger K."/>
            <person name="Sharp S."/>
            <person name="Skelton J."/>
            <person name="Simmonds M.N."/>
            <person name="Squares R."/>
            <person name="Squares S."/>
            <person name="Stevens K."/>
            <person name="Taylor K."/>
            <person name="Taylor R.G."/>
            <person name="Tivey A."/>
            <person name="Walsh S.V."/>
            <person name="Warren T."/>
            <person name="Whitehead S."/>
            <person name="Woodward J.R."/>
            <person name="Volckaert G."/>
            <person name="Aert R."/>
            <person name="Robben J."/>
            <person name="Grymonprez B."/>
            <person name="Weltjens I."/>
            <person name="Vanstreels E."/>
            <person name="Rieger M."/>
            <person name="Schaefer M."/>
            <person name="Mueller-Auer S."/>
            <person name="Gabel C."/>
            <person name="Fuchs M."/>
            <person name="Duesterhoeft A."/>
            <person name="Fritzc C."/>
            <person name="Holzer E."/>
            <person name="Moestl D."/>
            <person name="Hilbert H."/>
            <person name="Borzym K."/>
            <person name="Langer I."/>
            <person name="Beck A."/>
            <person name="Lehrach H."/>
            <person name="Reinhardt R."/>
            <person name="Pohl T.M."/>
            <person name="Eger P."/>
            <person name="Zimmermann W."/>
            <person name="Wedler H."/>
            <person name="Wambutt R."/>
            <person name="Purnelle B."/>
            <person name="Goffeau A."/>
            <person name="Cadieu E."/>
            <person name="Dreano S."/>
            <person name="Gloux S."/>
            <person name="Lelaure V."/>
            <person name="Mottier S."/>
            <person name="Galibert F."/>
            <person name="Aves S.J."/>
            <person name="Xiang Z."/>
            <person name="Hunt C."/>
            <person name="Moore K."/>
            <person name="Hurst S.M."/>
            <person name="Lucas M."/>
            <person name="Rochet M."/>
            <person name="Gaillardin C."/>
            <person name="Tallada V.A."/>
            <person name="Garzon A."/>
            <person name="Thode G."/>
            <person name="Daga R.R."/>
            <person name="Cruzado L."/>
            <person name="Jimenez J."/>
            <person name="Sanchez M."/>
            <person name="del Rey F."/>
            <person name="Benito J."/>
            <person name="Dominguez A."/>
            <person name="Revuelta J.L."/>
            <person name="Moreno S."/>
            <person name="Armstrong J."/>
            <person name="Forsburg S.L."/>
            <person name="Cerutti L."/>
            <person name="Lowe T."/>
            <person name="McCombie W.R."/>
            <person name="Paulsen I."/>
            <person name="Potashkin J."/>
            <person name="Shpakovski G.V."/>
            <person name="Ussery D."/>
            <person name="Barrell B.G."/>
            <person name="Nurse P."/>
        </authorList>
    </citation>
    <scope>NUCLEOTIDE SEQUENCE [LARGE SCALE GENOMIC DNA]</scope>
    <source>
        <strain>972 / ATCC 24843</strain>
    </source>
</reference>
<proteinExistence type="inferred from homology"/>
<sequence>MLLLFCICCVFIKLVLAEVNLTFVDYAKLPPNYAELLANLIDQHGLMLFDTADVRIEAYNYLLNSITETNTDTDAYLCQLLTGQYTTDCYIFGDSVYEGPENINPSTRYID</sequence>
<dbReference type="EMBL" id="CU329672">
    <property type="protein sequence ID" value="CAC22109.1"/>
    <property type="molecule type" value="Genomic_DNA"/>
</dbReference>
<dbReference type="RefSeq" id="NP_587674.1">
    <property type="nucleotide sequence ID" value="NM_001022670.2"/>
</dbReference>
<dbReference type="BioGRID" id="276135">
    <property type="interactions" value="39"/>
</dbReference>
<dbReference type="PaxDb" id="4896-SPCP20C8.02c.1"/>
<dbReference type="EnsemblFungi" id="SPCP20C8.02c.1">
    <property type="protein sequence ID" value="SPCP20C8.02c.1:pep"/>
    <property type="gene ID" value="SPCP20C8.02c"/>
</dbReference>
<dbReference type="KEGG" id="spo:2539575"/>
<dbReference type="PomBase" id="SPCP20C8.02c"/>
<dbReference type="VEuPathDB" id="FungiDB:SPCP20C8.02c"/>
<dbReference type="HOGENOM" id="CLU_2086172_0_0_1"/>
<dbReference type="InParanoid" id="Q9HDT7"/>
<dbReference type="PhylomeDB" id="Q9HDT7"/>
<dbReference type="PRO" id="PR:Q9HDT7"/>
<dbReference type="Proteomes" id="UP000002485">
    <property type="component" value="Chromosome III"/>
</dbReference>
<dbReference type="InterPro" id="IPR019445">
    <property type="entry name" value="UPF0321"/>
</dbReference>
<dbReference type="Pfam" id="PF10353">
    <property type="entry name" value="DUF2430"/>
    <property type="match status" value="1"/>
</dbReference>
<evidence type="ECO:0000255" key="1"/>
<evidence type="ECO:0000305" key="2"/>